<reference key="1">
    <citation type="journal article" date="1996" name="Science">
        <title>Complete genome sequence of the methanogenic archaeon, Methanococcus jannaschii.</title>
        <authorList>
            <person name="Bult C.J."/>
            <person name="White O."/>
            <person name="Olsen G.J."/>
            <person name="Zhou L."/>
            <person name="Fleischmann R.D."/>
            <person name="Sutton G.G."/>
            <person name="Blake J.A."/>
            <person name="FitzGerald L.M."/>
            <person name="Clayton R.A."/>
            <person name="Gocayne J.D."/>
            <person name="Kerlavage A.R."/>
            <person name="Dougherty B.A."/>
            <person name="Tomb J.-F."/>
            <person name="Adams M.D."/>
            <person name="Reich C.I."/>
            <person name="Overbeek R."/>
            <person name="Kirkness E.F."/>
            <person name="Weinstock K.G."/>
            <person name="Merrick J.M."/>
            <person name="Glodek A."/>
            <person name="Scott J.L."/>
            <person name="Geoghagen N.S.M."/>
            <person name="Weidman J.F."/>
            <person name="Fuhrmann J.L."/>
            <person name="Nguyen D."/>
            <person name="Utterback T.R."/>
            <person name="Kelley J.M."/>
            <person name="Peterson J.D."/>
            <person name="Sadow P.W."/>
            <person name="Hanna M.C."/>
            <person name="Cotton M.D."/>
            <person name="Roberts K.M."/>
            <person name="Hurst M.A."/>
            <person name="Kaine B.P."/>
            <person name="Borodovsky M."/>
            <person name="Klenk H.-P."/>
            <person name="Fraser C.M."/>
            <person name="Smith H.O."/>
            <person name="Woese C.R."/>
            <person name="Venter J.C."/>
        </authorList>
    </citation>
    <scope>NUCLEOTIDE SEQUENCE [LARGE SCALE GENOMIC DNA]</scope>
    <source>
        <strain>ATCC 43067 / DSM 2661 / JAL-1 / JCM 10045 / NBRC 100440</strain>
    </source>
</reference>
<evidence type="ECO:0000255" key="1"/>
<evidence type="ECO:0000305" key="2"/>
<proteinExistence type="inferred from homology"/>
<accession>Q58237</accession>
<protein>
    <recommendedName>
        <fullName>Uncharacterized protein MJ0827</fullName>
    </recommendedName>
</protein>
<keyword id="KW-0472">Membrane</keyword>
<keyword id="KW-1185">Reference proteome</keyword>
<keyword id="KW-0812">Transmembrane</keyword>
<keyword id="KW-1133">Transmembrane helix</keyword>
<feature type="chain" id="PRO_0000094064" description="Uncharacterized protein MJ0827">
    <location>
        <begin position="1"/>
        <end position="199"/>
    </location>
</feature>
<feature type="transmembrane region" description="Helical" evidence="1">
    <location>
        <begin position="7"/>
        <end position="27"/>
    </location>
</feature>
<comment type="subcellular location">
    <subcellularLocation>
        <location evidence="2">Membrane</location>
        <topology evidence="2">Single-pass membrane protein</topology>
    </subcellularLocation>
</comment>
<comment type="similarity">
    <text evidence="2">Belongs to the band 7/mec-2 family.</text>
</comment>
<name>Y827_METJA</name>
<dbReference type="EMBL" id="L77117">
    <property type="protein sequence ID" value="AAB98826.1"/>
    <property type="molecule type" value="Genomic_DNA"/>
</dbReference>
<dbReference type="PIR" id="C64403">
    <property type="entry name" value="C64403"/>
</dbReference>
<dbReference type="SMR" id="Q58237"/>
<dbReference type="FunCoup" id="Q58237">
    <property type="interactions" value="13"/>
</dbReference>
<dbReference type="STRING" id="243232.MJ_0827"/>
<dbReference type="PaxDb" id="243232-MJ_0827"/>
<dbReference type="EnsemblBacteria" id="AAB98826">
    <property type="protein sequence ID" value="AAB98826"/>
    <property type="gene ID" value="MJ_0827"/>
</dbReference>
<dbReference type="KEGG" id="mja:MJ_0827"/>
<dbReference type="eggNOG" id="arCOG01915">
    <property type="taxonomic scope" value="Archaea"/>
</dbReference>
<dbReference type="HOGENOM" id="CLU_024949_3_3_2"/>
<dbReference type="InParanoid" id="Q58237"/>
<dbReference type="PhylomeDB" id="Q58237"/>
<dbReference type="Proteomes" id="UP000000805">
    <property type="component" value="Chromosome"/>
</dbReference>
<dbReference type="GO" id="GO:0005886">
    <property type="term" value="C:plasma membrane"/>
    <property type="evidence" value="ECO:0000318"/>
    <property type="project" value="GO_Central"/>
</dbReference>
<dbReference type="FunFam" id="3.30.479.30:FF:000004">
    <property type="entry name" value="Putative membrane protease family, stomatin"/>
    <property type="match status" value="1"/>
</dbReference>
<dbReference type="Gene3D" id="3.30.479.30">
    <property type="entry name" value="Band 7 domain"/>
    <property type="match status" value="1"/>
</dbReference>
<dbReference type="InterPro" id="IPR043202">
    <property type="entry name" value="Band-7_stomatin-like"/>
</dbReference>
<dbReference type="InterPro" id="IPR001107">
    <property type="entry name" value="Band_7"/>
</dbReference>
<dbReference type="InterPro" id="IPR036013">
    <property type="entry name" value="Band_7/SPFH_dom_sf"/>
</dbReference>
<dbReference type="InterPro" id="IPR018080">
    <property type="entry name" value="Band_7/stomatin-like_CS"/>
</dbReference>
<dbReference type="InterPro" id="IPR001972">
    <property type="entry name" value="Stomatin_HflK_fam"/>
</dbReference>
<dbReference type="PANTHER" id="PTHR10264:SF19">
    <property type="entry name" value="AT06885P-RELATED"/>
    <property type="match status" value="1"/>
</dbReference>
<dbReference type="PANTHER" id="PTHR10264">
    <property type="entry name" value="BAND 7 PROTEIN-RELATED"/>
    <property type="match status" value="1"/>
</dbReference>
<dbReference type="Pfam" id="PF01145">
    <property type="entry name" value="Band_7"/>
    <property type="match status" value="1"/>
</dbReference>
<dbReference type="PRINTS" id="PR00721">
    <property type="entry name" value="STOMATIN"/>
</dbReference>
<dbReference type="SMART" id="SM00244">
    <property type="entry name" value="PHB"/>
    <property type="match status" value="1"/>
</dbReference>
<dbReference type="SUPFAM" id="SSF117892">
    <property type="entry name" value="Band 7/SPFH domain"/>
    <property type="match status" value="1"/>
</dbReference>
<dbReference type="PROSITE" id="PS01270">
    <property type="entry name" value="BAND_7"/>
    <property type="match status" value="1"/>
</dbReference>
<gene>
    <name type="ordered locus">MJ0827</name>
</gene>
<sequence length="199" mass="22809">MKVNDMFWFWLILGIIALFIIVKAIVIVNQYEGGLIFRLGRVIGKLKPGINIIIPFLDVPVKVDMRTRVTDIPPQEMITKDNAVVKVDAVVYYRVIDVEKAILEVEDYEYAIINLAQTTLRAIIGSMELDEVLNKREYINSKLLEILDRETDAWGVRIEKVEVKEIDPPEDIKNAMAQQMKAERLKRAAILEAEGEKPE</sequence>
<organism>
    <name type="scientific">Methanocaldococcus jannaschii (strain ATCC 43067 / DSM 2661 / JAL-1 / JCM 10045 / NBRC 100440)</name>
    <name type="common">Methanococcus jannaschii</name>
    <dbReference type="NCBI Taxonomy" id="243232"/>
    <lineage>
        <taxon>Archaea</taxon>
        <taxon>Methanobacteriati</taxon>
        <taxon>Methanobacteriota</taxon>
        <taxon>Methanomada group</taxon>
        <taxon>Methanococci</taxon>
        <taxon>Methanococcales</taxon>
        <taxon>Methanocaldococcaceae</taxon>
        <taxon>Methanocaldococcus</taxon>
    </lineage>
</organism>